<proteinExistence type="inferred from homology"/>
<name>GLYA_SYNC1</name>
<gene>
    <name evidence="1" type="primary">glyA</name>
    <name type="ordered locus">Pcar_1442</name>
</gene>
<reference key="1">
    <citation type="submission" date="2005-10" db="EMBL/GenBank/DDBJ databases">
        <title>Complete sequence of Pelobacter carbinolicus DSM 2380.</title>
        <authorList>
            <person name="Copeland A."/>
            <person name="Lucas S."/>
            <person name="Lapidus A."/>
            <person name="Barry K."/>
            <person name="Detter J.C."/>
            <person name="Glavina T."/>
            <person name="Hammon N."/>
            <person name="Israni S."/>
            <person name="Pitluck S."/>
            <person name="Chertkov O."/>
            <person name="Schmutz J."/>
            <person name="Larimer F."/>
            <person name="Land M."/>
            <person name="Kyrpides N."/>
            <person name="Ivanova N."/>
            <person name="Richardson P."/>
        </authorList>
    </citation>
    <scope>NUCLEOTIDE SEQUENCE [LARGE SCALE GENOMIC DNA]</scope>
    <source>
        <strain>DSM 2380 / NBRC 103641 / GraBd1</strain>
    </source>
</reference>
<comment type="function">
    <text evidence="1">Catalyzes the reversible interconversion of serine and glycine with tetrahydrofolate (THF) serving as the one-carbon carrier. This reaction serves as the major source of one-carbon groups required for the biosynthesis of purines, thymidylate, methionine, and other important biomolecules. Also exhibits THF-independent aldolase activity toward beta-hydroxyamino acids, producing glycine and aldehydes, via a retro-aldol mechanism.</text>
</comment>
<comment type="catalytic activity">
    <reaction evidence="1">
        <text>(6R)-5,10-methylene-5,6,7,8-tetrahydrofolate + glycine + H2O = (6S)-5,6,7,8-tetrahydrofolate + L-serine</text>
        <dbReference type="Rhea" id="RHEA:15481"/>
        <dbReference type="ChEBI" id="CHEBI:15377"/>
        <dbReference type="ChEBI" id="CHEBI:15636"/>
        <dbReference type="ChEBI" id="CHEBI:33384"/>
        <dbReference type="ChEBI" id="CHEBI:57305"/>
        <dbReference type="ChEBI" id="CHEBI:57453"/>
        <dbReference type="EC" id="2.1.2.1"/>
    </reaction>
</comment>
<comment type="cofactor">
    <cofactor evidence="1">
        <name>pyridoxal 5'-phosphate</name>
        <dbReference type="ChEBI" id="CHEBI:597326"/>
    </cofactor>
</comment>
<comment type="pathway">
    <text evidence="1">One-carbon metabolism; tetrahydrofolate interconversion.</text>
</comment>
<comment type="pathway">
    <text evidence="1">Amino-acid biosynthesis; glycine biosynthesis; glycine from L-serine: step 1/1.</text>
</comment>
<comment type="subunit">
    <text evidence="1">Homodimer.</text>
</comment>
<comment type="subcellular location">
    <subcellularLocation>
        <location evidence="1">Cytoplasm</location>
    </subcellularLocation>
</comment>
<comment type="similarity">
    <text evidence="1">Belongs to the SHMT family.</text>
</comment>
<evidence type="ECO:0000255" key="1">
    <source>
        <dbReference type="HAMAP-Rule" id="MF_00051"/>
    </source>
</evidence>
<accession>Q3A4L9</accession>
<dbReference type="EC" id="2.1.2.1" evidence="1"/>
<dbReference type="EMBL" id="CP000142">
    <property type="protein sequence ID" value="ABA88688.1"/>
    <property type="molecule type" value="Genomic_DNA"/>
</dbReference>
<dbReference type="RefSeq" id="WP_011341171.1">
    <property type="nucleotide sequence ID" value="NC_007498.2"/>
</dbReference>
<dbReference type="SMR" id="Q3A4L9"/>
<dbReference type="STRING" id="338963.Pcar_1442"/>
<dbReference type="KEGG" id="pca:Pcar_1442"/>
<dbReference type="eggNOG" id="COG0112">
    <property type="taxonomic scope" value="Bacteria"/>
</dbReference>
<dbReference type="HOGENOM" id="CLU_022477_2_1_7"/>
<dbReference type="OrthoDB" id="9803846at2"/>
<dbReference type="UniPathway" id="UPA00193"/>
<dbReference type="UniPathway" id="UPA00288">
    <property type="reaction ID" value="UER01023"/>
</dbReference>
<dbReference type="Proteomes" id="UP000002534">
    <property type="component" value="Chromosome"/>
</dbReference>
<dbReference type="GO" id="GO:0005829">
    <property type="term" value="C:cytosol"/>
    <property type="evidence" value="ECO:0007669"/>
    <property type="project" value="TreeGrafter"/>
</dbReference>
<dbReference type="GO" id="GO:0004372">
    <property type="term" value="F:glycine hydroxymethyltransferase activity"/>
    <property type="evidence" value="ECO:0007669"/>
    <property type="project" value="UniProtKB-UniRule"/>
</dbReference>
<dbReference type="GO" id="GO:0030170">
    <property type="term" value="F:pyridoxal phosphate binding"/>
    <property type="evidence" value="ECO:0007669"/>
    <property type="project" value="UniProtKB-UniRule"/>
</dbReference>
<dbReference type="GO" id="GO:0019264">
    <property type="term" value="P:glycine biosynthetic process from serine"/>
    <property type="evidence" value="ECO:0007669"/>
    <property type="project" value="UniProtKB-UniRule"/>
</dbReference>
<dbReference type="GO" id="GO:0035999">
    <property type="term" value="P:tetrahydrofolate interconversion"/>
    <property type="evidence" value="ECO:0007669"/>
    <property type="project" value="UniProtKB-UniRule"/>
</dbReference>
<dbReference type="CDD" id="cd00378">
    <property type="entry name" value="SHMT"/>
    <property type="match status" value="1"/>
</dbReference>
<dbReference type="FunFam" id="3.40.640.10:FF:000001">
    <property type="entry name" value="Serine hydroxymethyltransferase"/>
    <property type="match status" value="1"/>
</dbReference>
<dbReference type="FunFam" id="3.90.1150.10:FF:000003">
    <property type="entry name" value="Serine hydroxymethyltransferase"/>
    <property type="match status" value="1"/>
</dbReference>
<dbReference type="Gene3D" id="3.90.1150.10">
    <property type="entry name" value="Aspartate Aminotransferase, domain 1"/>
    <property type="match status" value="1"/>
</dbReference>
<dbReference type="Gene3D" id="3.40.640.10">
    <property type="entry name" value="Type I PLP-dependent aspartate aminotransferase-like (Major domain)"/>
    <property type="match status" value="1"/>
</dbReference>
<dbReference type="HAMAP" id="MF_00051">
    <property type="entry name" value="SHMT"/>
    <property type="match status" value="1"/>
</dbReference>
<dbReference type="InterPro" id="IPR015424">
    <property type="entry name" value="PyrdxlP-dep_Trfase"/>
</dbReference>
<dbReference type="InterPro" id="IPR015421">
    <property type="entry name" value="PyrdxlP-dep_Trfase_major"/>
</dbReference>
<dbReference type="InterPro" id="IPR015422">
    <property type="entry name" value="PyrdxlP-dep_Trfase_small"/>
</dbReference>
<dbReference type="InterPro" id="IPR001085">
    <property type="entry name" value="Ser_HO-MeTrfase"/>
</dbReference>
<dbReference type="InterPro" id="IPR049943">
    <property type="entry name" value="Ser_HO-MeTrfase-like"/>
</dbReference>
<dbReference type="InterPro" id="IPR019798">
    <property type="entry name" value="Ser_HO-MeTrfase_PLP_BS"/>
</dbReference>
<dbReference type="InterPro" id="IPR039429">
    <property type="entry name" value="SHMT-like_dom"/>
</dbReference>
<dbReference type="NCBIfam" id="NF000586">
    <property type="entry name" value="PRK00011.1"/>
    <property type="match status" value="1"/>
</dbReference>
<dbReference type="PANTHER" id="PTHR11680">
    <property type="entry name" value="SERINE HYDROXYMETHYLTRANSFERASE"/>
    <property type="match status" value="1"/>
</dbReference>
<dbReference type="PANTHER" id="PTHR11680:SF50">
    <property type="entry name" value="SERINE HYDROXYMETHYLTRANSFERASE"/>
    <property type="match status" value="1"/>
</dbReference>
<dbReference type="Pfam" id="PF00464">
    <property type="entry name" value="SHMT"/>
    <property type="match status" value="1"/>
</dbReference>
<dbReference type="PIRSF" id="PIRSF000412">
    <property type="entry name" value="SHMT"/>
    <property type="match status" value="1"/>
</dbReference>
<dbReference type="SUPFAM" id="SSF53383">
    <property type="entry name" value="PLP-dependent transferases"/>
    <property type="match status" value="1"/>
</dbReference>
<dbReference type="PROSITE" id="PS00096">
    <property type="entry name" value="SHMT"/>
    <property type="match status" value="1"/>
</dbReference>
<keyword id="KW-0028">Amino-acid biosynthesis</keyword>
<keyword id="KW-0963">Cytoplasm</keyword>
<keyword id="KW-0554">One-carbon metabolism</keyword>
<keyword id="KW-0663">Pyridoxal phosphate</keyword>
<keyword id="KW-1185">Reference proteome</keyword>
<keyword id="KW-0808">Transferase</keyword>
<protein>
    <recommendedName>
        <fullName evidence="1">Serine hydroxymethyltransferase</fullName>
        <shortName evidence="1">SHMT</shortName>
        <shortName evidence="1">Serine methylase</shortName>
        <ecNumber evidence="1">2.1.2.1</ecNumber>
    </recommendedName>
</protein>
<feature type="chain" id="PRO_0000234996" description="Serine hydroxymethyltransferase">
    <location>
        <begin position="1"/>
        <end position="416"/>
    </location>
</feature>
<feature type="binding site" evidence="1">
    <location>
        <position position="118"/>
    </location>
    <ligand>
        <name>(6S)-5,6,7,8-tetrahydrofolate</name>
        <dbReference type="ChEBI" id="CHEBI:57453"/>
    </ligand>
</feature>
<feature type="binding site" evidence="1">
    <location>
        <begin position="122"/>
        <end position="124"/>
    </location>
    <ligand>
        <name>(6S)-5,6,7,8-tetrahydrofolate</name>
        <dbReference type="ChEBI" id="CHEBI:57453"/>
    </ligand>
</feature>
<feature type="binding site" evidence="1">
    <location>
        <position position="242"/>
    </location>
    <ligand>
        <name>(6S)-5,6,7,8-tetrahydrofolate</name>
        <dbReference type="ChEBI" id="CHEBI:57453"/>
    </ligand>
</feature>
<feature type="binding site" evidence="1">
    <location>
        <begin position="350"/>
        <end position="352"/>
    </location>
    <ligand>
        <name>(6S)-5,6,7,8-tetrahydrofolate</name>
        <dbReference type="ChEBI" id="CHEBI:57453"/>
    </ligand>
</feature>
<feature type="site" description="Plays an important role in substrate specificity" evidence="1">
    <location>
        <position position="226"/>
    </location>
</feature>
<feature type="modified residue" description="N6-(pyridoxal phosphate)lysine" evidence="1">
    <location>
        <position position="227"/>
    </location>
</feature>
<sequence length="416" mass="45455">MSQTLIQQDPEIAEAIRLETERQEYNLEFIASENFVSEQVMEAQGSIMTNKYAEGYPAKRYYGGCEMVDIAERLAIERAKELFGAEHANVQAHSGSQANMAVYFAACKPGDTVLGMNLAHGGHLTHGSPVNFSGKLFNIVSYGVQKETGYIDYEEVERLALEHKPTLLVVGASAYPRTIDFPAFRKIADKVGAKIMVDMAHIAGLVAAGVHPSPVPYAEFVTTTTHKTLRGPRGGMILCREEFAKTIDSNIFPGIQGGPLMHVIAAKAVSFKEALAPEFKEYSTQVVKNAKVLADALVKRGLNLVSGGTDNHLILVDFTGTETTGKMAEKALEKAGITVNKNSVPFETRSPFVTSGIRLGTPATTTRGLKEAEMERVADWVVRALDNMENDTELAAIKGEVREMCKRFPLYAHLLK</sequence>
<organism>
    <name type="scientific">Syntrophotalea carbinolica (strain DSM 2380 / NBRC 103641 / GraBd1)</name>
    <name type="common">Pelobacter carbinolicus</name>
    <dbReference type="NCBI Taxonomy" id="338963"/>
    <lineage>
        <taxon>Bacteria</taxon>
        <taxon>Pseudomonadati</taxon>
        <taxon>Thermodesulfobacteriota</taxon>
        <taxon>Desulfuromonadia</taxon>
        <taxon>Desulfuromonadales</taxon>
        <taxon>Syntrophotaleaceae</taxon>
        <taxon>Syntrophotalea</taxon>
    </lineage>
</organism>